<sequence length="423" mass="47907">MASALEQFVNNVRQLSAQGQMTQLCELINKSGELLAKNLSHLDTVLGALDIQEHSLGVLAVLFVKFSMPNIPDFETLFSQVQLFISTCNGEHIRYATDTFAGLCHQLTNALVERKQPLRGISILKQAIDKMQMNTNQLTSVHADLCQLCLLAKCFKPAVPFLELDMMDICKENGAYDAKHFLCYYYYGGMIYTGLKNFERALYFFEQAITTPAMAVSHIMLEAYKKYILVSLILHGKVQQLPKYTSQIVGRFIKPLSNAYHELAQIYATNNPAELRALVNKHSETFTRDNNTGLVKQCLSSLYKKNIQRLTKTFLTLSLQDMASRVQLSGPQEAEKYVLHMIEDGEIYASINQKDGMVCFHDNPEKYNNPAMLHKIDQEMLKCIELDEKLKSMDQEITVNPQFVQKSMGTQEDDVGSKTSSYS</sequence>
<protein>
    <recommendedName>
        <fullName>COP9 signalosome complex subunit 3</fullName>
        <shortName>Signalosome subunit 3</shortName>
    </recommendedName>
</protein>
<proteinExistence type="evidence at transcript level"/>
<feature type="chain" id="PRO_0000120980" description="COP9 signalosome complex subunit 3">
    <location>
        <begin position="1"/>
        <end position="423"/>
    </location>
</feature>
<feature type="domain" description="PCI" evidence="2">
    <location>
        <begin position="197"/>
        <end position="365"/>
    </location>
</feature>
<feature type="region of interest" description="Disordered" evidence="3">
    <location>
        <begin position="402"/>
        <end position="423"/>
    </location>
</feature>
<feature type="sequence conflict" description="In Ref. 1; AAH45415." evidence="4" ref="1">
    <original>A</original>
    <variation>S</variation>
    <location>
        <position position="36"/>
    </location>
</feature>
<feature type="sequence conflict" description="In Ref. 1; AAH45415." evidence="4" ref="1">
    <original>T</original>
    <variation>S</variation>
    <location>
        <position position="292"/>
    </location>
</feature>
<comment type="function">
    <text evidence="1">Component of the COP9 signalosome complex (CSN), a complex involved in various cellular and developmental processes (By similarity). The CSN complex is an essential regulator of the ubiquitin (Ubl) conjugation pathway by mediating the deneddylation of the cullin subunits of E3 ligase complexes, leading to modify the Ubl ligase activity (By similarity).</text>
</comment>
<comment type="subunit">
    <text evidence="1">Component of the CSN complex, probably composed of cops1, cops2, cops3, cops4, cops5, cops6, cops7, cops8 and cops9.</text>
</comment>
<comment type="subcellular location">
    <subcellularLocation>
        <location evidence="1">Cytoplasm</location>
    </subcellularLocation>
    <subcellularLocation>
        <location evidence="1">Nucleus</location>
    </subcellularLocation>
</comment>
<comment type="similarity">
    <text evidence="4">Belongs to the CSN3 family.</text>
</comment>
<dbReference type="EMBL" id="BC045415">
    <property type="protein sequence ID" value="AAH45415.1"/>
    <property type="molecule type" value="mRNA"/>
</dbReference>
<dbReference type="EMBL" id="BC064288">
    <property type="protein sequence ID" value="AAH64288.1"/>
    <property type="molecule type" value="mRNA"/>
</dbReference>
<dbReference type="RefSeq" id="NP_955979.1">
    <property type="nucleotide sequence ID" value="NM_199685.1"/>
</dbReference>
<dbReference type="SMR" id="Q6P2U9"/>
<dbReference type="FunCoup" id="Q6P2U9">
    <property type="interactions" value="2816"/>
</dbReference>
<dbReference type="STRING" id="7955.ENSDARP00000021983"/>
<dbReference type="PaxDb" id="7955-ENSDARP00000021983"/>
<dbReference type="GeneID" id="335720"/>
<dbReference type="KEGG" id="dre:335720"/>
<dbReference type="AGR" id="ZFIN:ZDB-GENE-030131-7660"/>
<dbReference type="CTD" id="8533"/>
<dbReference type="ZFIN" id="ZDB-GENE-030131-7660">
    <property type="gene designation" value="cops3"/>
</dbReference>
<dbReference type="eggNOG" id="KOG2582">
    <property type="taxonomic scope" value="Eukaryota"/>
</dbReference>
<dbReference type="InParanoid" id="Q6P2U9"/>
<dbReference type="OrthoDB" id="29061at2759"/>
<dbReference type="PhylomeDB" id="Q6P2U9"/>
<dbReference type="Reactome" id="R-DRE-8856825">
    <property type="pathway name" value="Cargo recognition for clathrin-mediated endocytosis"/>
</dbReference>
<dbReference type="Reactome" id="R-DRE-8951664">
    <property type="pathway name" value="Neddylation"/>
</dbReference>
<dbReference type="PRO" id="PR:Q6P2U9"/>
<dbReference type="Proteomes" id="UP000000437">
    <property type="component" value="Chromosome 12"/>
</dbReference>
<dbReference type="GO" id="GO:0008180">
    <property type="term" value="C:COP9 signalosome"/>
    <property type="evidence" value="ECO:0000318"/>
    <property type="project" value="GO_Central"/>
</dbReference>
<dbReference type="GO" id="GO:0005737">
    <property type="term" value="C:cytoplasm"/>
    <property type="evidence" value="ECO:0007669"/>
    <property type="project" value="UniProtKB-SubCell"/>
</dbReference>
<dbReference type="GO" id="GO:0006511">
    <property type="term" value="P:ubiquitin-dependent protein catabolic process"/>
    <property type="evidence" value="ECO:0000318"/>
    <property type="project" value="GO_Central"/>
</dbReference>
<dbReference type="FunFam" id="1.10.10.10:FF:000354">
    <property type="entry name" value="COP9 signalosome complex subunit 3"/>
    <property type="match status" value="1"/>
</dbReference>
<dbReference type="FunFam" id="1.25.40.570:FF:000008">
    <property type="entry name" value="COP9 signalosome complex subunit 3"/>
    <property type="match status" value="1"/>
</dbReference>
<dbReference type="Gene3D" id="1.25.40.570">
    <property type="match status" value="1"/>
</dbReference>
<dbReference type="InterPro" id="IPR055089">
    <property type="entry name" value="COP9_N"/>
</dbReference>
<dbReference type="InterPro" id="IPR050756">
    <property type="entry name" value="CSN3"/>
</dbReference>
<dbReference type="InterPro" id="IPR048621">
    <property type="entry name" value="CSN3_C"/>
</dbReference>
<dbReference type="InterPro" id="IPR000717">
    <property type="entry name" value="PCI_dom"/>
</dbReference>
<dbReference type="InterPro" id="IPR036390">
    <property type="entry name" value="WH_DNA-bd_sf"/>
</dbReference>
<dbReference type="PANTHER" id="PTHR10758">
    <property type="entry name" value="26S PROTEASOME NON-ATPASE REGULATORY SUBUNIT 3/COP9 SIGNALOSOME COMPLEX SUBUNIT 3"/>
    <property type="match status" value="1"/>
</dbReference>
<dbReference type="PANTHER" id="PTHR10758:SF1">
    <property type="entry name" value="COP9 SIGNALOSOME COMPLEX SUBUNIT 3"/>
    <property type="match status" value="1"/>
</dbReference>
<dbReference type="Pfam" id="PF22788">
    <property type="entry name" value="COP9_hel_rpt"/>
    <property type="match status" value="1"/>
</dbReference>
<dbReference type="Pfam" id="PF21215">
    <property type="entry name" value="CSN3-like_C"/>
    <property type="match status" value="1"/>
</dbReference>
<dbReference type="Pfam" id="PF01399">
    <property type="entry name" value="PCI"/>
    <property type="match status" value="1"/>
</dbReference>
<dbReference type="SMART" id="SM00088">
    <property type="entry name" value="PINT"/>
    <property type="match status" value="1"/>
</dbReference>
<dbReference type="SUPFAM" id="SSF46785">
    <property type="entry name" value="Winged helix' DNA-binding domain"/>
    <property type="match status" value="1"/>
</dbReference>
<dbReference type="PROSITE" id="PS50250">
    <property type="entry name" value="PCI"/>
    <property type="match status" value="1"/>
</dbReference>
<evidence type="ECO:0000250" key="1">
    <source>
        <dbReference type="UniProtKB" id="Q9UNS2"/>
    </source>
</evidence>
<evidence type="ECO:0000255" key="2">
    <source>
        <dbReference type="PROSITE-ProRule" id="PRU01185"/>
    </source>
</evidence>
<evidence type="ECO:0000256" key="3">
    <source>
        <dbReference type="SAM" id="MobiDB-lite"/>
    </source>
</evidence>
<evidence type="ECO:0000305" key="4"/>
<accession>Q6P2U9</accession>
<accession>Q7ZVT8</accession>
<organism>
    <name type="scientific">Danio rerio</name>
    <name type="common">Zebrafish</name>
    <name type="synonym">Brachydanio rerio</name>
    <dbReference type="NCBI Taxonomy" id="7955"/>
    <lineage>
        <taxon>Eukaryota</taxon>
        <taxon>Metazoa</taxon>
        <taxon>Chordata</taxon>
        <taxon>Craniata</taxon>
        <taxon>Vertebrata</taxon>
        <taxon>Euteleostomi</taxon>
        <taxon>Actinopterygii</taxon>
        <taxon>Neopterygii</taxon>
        <taxon>Teleostei</taxon>
        <taxon>Ostariophysi</taxon>
        <taxon>Cypriniformes</taxon>
        <taxon>Danionidae</taxon>
        <taxon>Danioninae</taxon>
        <taxon>Danio</taxon>
    </lineage>
</organism>
<reference key="1">
    <citation type="submission" date="2003-12" db="EMBL/GenBank/DDBJ databases">
        <authorList>
            <consortium name="NIH - Zebrafish Gene Collection (ZGC) project"/>
        </authorList>
    </citation>
    <scope>NUCLEOTIDE SEQUENCE [LARGE SCALE MRNA]</scope>
    <source>
        <strain>AB</strain>
    </source>
</reference>
<gene>
    <name type="primary">cops3</name>
    <name type="synonym">csn3</name>
    <name type="ORF">wu:fc32a02</name>
</gene>
<keyword id="KW-0963">Cytoplasm</keyword>
<keyword id="KW-0539">Nucleus</keyword>
<keyword id="KW-1185">Reference proteome</keyword>
<keyword id="KW-0736">Signalosome</keyword>
<name>CSN3_DANRE</name>